<gene>
    <name evidence="1" type="primary">metG</name>
    <name type="ordered locus">Tfu_0389</name>
</gene>
<evidence type="ECO:0000255" key="1">
    <source>
        <dbReference type="HAMAP-Rule" id="MF_00098"/>
    </source>
</evidence>
<accession>Q47SZ0</accession>
<reference key="1">
    <citation type="journal article" date="2007" name="J. Bacteriol.">
        <title>Genome sequence and analysis of the soil cellulolytic actinomycete Thermobifida fusca YX.</title>
        <authorList>
            <person name="Lykidis A."/>
            <person name="Mavromatis K."/>
            <person name="Ivanova N."/>
            <person name="Anderson I."/>
            <person name="Land M."/>
            <person name="DiBartolo G."/>
            <person name="Martinez M."/>
            <person name="Lapidus A."/>
            <person name="Lucas S."/>
            <person name="Copeland A."/>
            <person name="Richardson P."/>
            <person name="Wilson D.B."/>
            <person name="Kyrpides N."/>
        </authorList>
    </citation>
    <scope>NUCLEOTIDE SEQUENCE [LARGE SCALE GENOMIC DNA]</scope>
    <source>
        <strain>YX</strain>
    </source>
</reference>
<proteinExistence type="inferred from homology"/>
<dbReference type="EC" id="6.1.1.10" evidence="1"/>
<dbReference type="EMBL" id="CP000088">
    <property type="protein sequence ID" value="AAZ54427.1"/>
    <property type="molecule type" value="Genomic_DNA"/>
</dbReference>
<dbReference type="RefSeq" id="WP_011290836.1">
    <property type="nucleotide sequence ID" value="NC_007333.1"/>
</dbReference>
<dbReference type="SMR" id="Q47SZ0"/>
<dbReference type="STRING" id="269800.Tfu_0389"/>
<dbReference type="KEGG" id="tfu:Tfu_0389"/>
<dbReference type="eggNOG" id="COG0143">
    <property type="taxonomic scope" value="Bacteria"/>
</dbReference>
<dbReference type="HOGENOM" id="CLU_009710_1_2_11"/>
<dbReference type="OrthoDB" id="9810191at2"/>
<dbReference type="GO" id="GO:0005829">
    <property type="term" value="C:cytosol"/>
    <property type="evidence" value="ECO:0007669"/>
    <property type="project" value="TreeGrafter"/>
</dbReference>
<dbReference type="GO" id="GO:0005524">
    <property type="term" value="F:ATP binding"/>
    <property type="evidence" value="ECO:0007669"/>
    <property type="project" value="UniProtKB-UniRule"/>
</dbReference>
<dbReference type="GO" id="GO:0046872">
    <property type="term" value="F:metal ion binding"/>
    <property type="evidence" value="ECO:0007669"/>
    <property type="project" value="UniProtKB-KW"/>
</dbReference>
<dbReference type="GO" id="GO:0004825">
    <property type="term" value="F:methionine-tRNA ligase activity"/>
    <property type="evidence" value="ECO:0007669"/>
    <property type="project" value="UniProtKB-UniRule"/>
</dbReference>
<dbReference type="GO" id="GO:0006431">
    <property type="term" value="P:methionyl-tRNA aminoacylation"/>
    <property type="evidence" value="ECO:0007669"/>
    <property type="project" value="UniProtKB-UniRule"/>
</dbReference>
<dbReference type="CDD" id="cd07957">
    <property type="entry name" value="Anticodon_Ia_Met"/>
    <property type="match status" value="1"/>
</dbReference>
<dbReference type="CDD" id="cd00814">
    <property type="entry name" value="MetRS_core"/>
    <property type="match status" value="1"/>
</dbReference>
<dbReference type="FunFam" id="2.20.28.20:FF:000001">
    <property type="entry name" value="Methionine--tRNA ligase"/>
    <property type="match status" value="1"/>
</dbReference>
<dbReference type="Gene3D" id="3.40.50.620">
    <property type="entry name" value="HUPs"/>
    <property type="match status" value="1"/>
</dbReference>
<dbReference type="Gene3D" id="1.10.730.10">
    <property type="entry name" value="Isoleucyl-tRNA Synthetase, Domain 1"/>
    <property type="match status" value="1"/>
</dbReference>
<dbReference type="Gene3D" id="2.20.28.20">
    <property type="entry name" value="Methionyl-tRNA synthetase, Zn-domain"/>
    <property type="match status" value="1"/>
</dbReference>
<dbReference type="HAMAP" id="MF_00098">
    <property type="entry name" value="Met_tRNA_synth_type1"/>
    <property type="match status" value="1"/>
</dbReference>
<dbReference type="InterPro" id="IPR041872">
    <property type="entry name" value="Anticodon_Met"/>
</dbReference>
<dbReference type="InterPro" id="IPR023458">
    <property type="entry name" value="Met-tRNA_ligase_1"/>
</dbReference>
<dbReference type="InterPro" id="IPR014758">
    <property type="entry name" value="Met-tRNA_synth"/>
</dbReference>
<dbReference type="InterPro" id="IPR015413">
    <property type="entry name" value="Methionyl/Leucyl_tRNA_Synth"/>
</dbReference>
<dbReference type="InterPro" id="IPR033911">
    <property type="entry name" value="MetRS_core"/>
</dbReference>
<dbReference type="InterPro" id="IPR029038">
    <property type="entry name" value="MetRS_Zn"/>
</dbReference>
<dbReference type="InterPro" id="IPR014729">
    <property type="entry name" value="Rossmann-like_a/b/a_fold"/>
</dbReference>
<dbReference type="InterPro" id="IPR009080">
    <property type="entry name" value="tRNAsynth_Ia_anticodon-bd"/>
</dbReference>
<dbReference type="NCBIfam" id="TIGR00398">
    <property type="entry name" value="metG"/>
    <property type="match status" value="1"/>
</dbReference>
<dbReference type="PANTHER" id="PTHR45765">
    <property type="entry name" value="METHIONINE--TRNA LIGASE"/>
    <property type="match status" value="1"/>
</dbReference>
<dbReference type="PANTHER" id="PTHR45765:SF1">
    <property type="entry name" value="METHIONINE--TRNA LIGASE, CYTOPLASMIC"/>
    <property type="match status" value="1"/>
</dbReference>
<dbReference type="Pfam" id="PF19303">
    <property type="entry name" value="Anticodon_3"/>
    <property type="match status" value="1"/>
</dbReference>
<dbReference type="Pfam" id="PF09334">
    <property type="entry name" value="tRNA-synt_1g"/>
    <property type="match status" value="1"/>
</dbReference>
<dbReference type="PRINTS" id="PR01041">
    <property type="entry name" value="TRNASYNTHMET"/>
</dbReference>
<dbReference type="SUPFAM" id="SSF47323">
    <property type="entry name" value="Anticodon-binding domain of a subclass of class I aminoacyl-tRNA synthetases"/>
    <property type="match status" value="1"/>
</dbReference>
<dbReference type="SUPFAM" id="SSF57770">
    <property type="entry name" value="Methionyl-tRNA synthetase (MetRS), Zn-domain"/>
    <property type="match status" value="1"/>
</dbReference>
<dbReference type="SUPFAM" id="SSF52374">
    <property type="entry name" value="Nucleotidylyl transferase"/>
    <property type="match status" value="1"/>
</dbReference>
<protein>
    <recommendedName>
        <fullName evidence="1">Methionine--tRNA ligase</fullName>
        <ecNumber evidence="1">6.1.1.10</ecNumber>
    </recommendedName>
    <alternativeName>
        <fullName evidence="1">Methionyl-tRNA synthetase</fullName>
        <shortName evidence="1">MetRS</shortName>
    </alternativeName>
</protein>
<comment type="function">
    <text evidence="1">Is required not only for elongation of protein synthesis but also for the initiation of all mRNA translation through initiator tRNA(fMet) aminoacylation.</text>
</comment>
<comment type="catalytic activity">
    <reaction evidence="1">
        <text>tRNA(Met) + L-methionine + ATP = L-methionyl-tRNA(Met) + AMP + diphosphate</text>
        <dbReference type="Rhea" id="RHEA:13481"/>
        <dbReference type="Rhea" id="RHEA-COMP:9667"/>
        <dbReference type="Rhea" id="RHEA-COMP:9698"/>
        <dbReference type="ChEBI" id="CHEBI:30616"/>
        <dbReference type="ChEBI" id="CHEBI:33019"/>
        <dbReference type="ChEBI" id="CHEBI:57844"/>
        <dbReference type="ChEBI" id="CHEBI:78442"/>
        <dbReference type="ChEBI" id="CHEBI:78530"/>
        <dbReference type="ChEBI" id="CHEBI:456215"/>
        <dbReference type="EC" id="6.1.1.10"/>
    </reaction>
</comment>
<comment type="cofactor">
    <cofactor evidence="1">
        <name>Zn(2+)</name>
        <dbReference type="ChEBI" id="CHEBI:29105"/>
    </cofactor>
    <text evidence="1">Binds 1 zinc ion per subunit.</text>
</comment>
<comment type="subunit">
    <text evidence="1">Monomer.</text>
</comment>
<comment type="subcellular location">
    <subcellularLocation>
        <location evidence="1">Cytoplasm</location>
    </subcellularLocation>
</comment>
<comment type="similarity">
    <text evidence="1">Belongs to the class-I aminoacyl-tRNA synthetase family. MetG type 1 subfamily.</text>
</comment>
<sequence length="606" mass="67359">MSSKRHILTAVAWPYANGPRHIGHVSGFGVPSDVFARFQRMSGNNVLMVSGTDEHGTPIQVLADQEGVSARELADRYNRIIAEDLVALGLSYDLFTRTTTANHYAVVQELFTGLYRNGYIFSKTTKGAISPSTGRTLPDRYVEGTCPICGYDGARGDQCDNCGKQLDPTDLINPRSKINGETPEFVDTEHFMLDLPAFAEQLSEWLKSKGGEWRPNVLKFSLNLLDELQPRAITRDLDWGVPIPLEGWRDQPNKRLYVWFDAVIGYLSASIEWAKRTGDPEAWRKWWQNSDAESFYFMGKDNIVFHSEIWPAMLLGYSGKGSKGGEPGSLGALNLPTEVVSSEFLTMEGRKFSSSRRVVIYVRDFLERYDADALRYYIIAAGPETQDTDFTWAEFVRRNNDELVATWGNLVNRSISMAAKNIGHIPEAGELTDADRAVLDASKAAFATVGERLNRAQFKAALQEAMRVVAEANKYFSEQAPWKLKKTDPKRMETVLHVALQLVSDAKTLLTPFLPASSNKVYEMLGGTGTWTGMPRLEEATDSIGGEEGVSTYPVITGDYADNEARWESIPIVPGTPLKPPTPLFRKLDQSVVDEELARLEAAAGA</sequence>
<keyword id="KW-0030">Aminoacyl-tRNA synthetase</keyword>
<keyword id="KW-0067">ATP-binding</keyword>
<keyword id="KW-0963">Cytoplasm</keyword>
<keyword id="KW-0436">Ligase</keyword>
<keyword id="KW-0479">Metal-binding</keyword>
<keyword id="KW-0547">Nucleotide-binding</keyword>
<keyword id="KW-0648">Protein biosynthesis</keyword>
<keyword id="KW-0862">Zinc</keyword>
<organism>
    <name type="scientific">Thermobifida fusca (strain YX)</name>
    <dbReference type="NCBI Taxonomy" id="269800"/>
    <lineage>
        <taxon>Bacteria</taxon>
        <taxon>Bacillati</taxon>
        <taxon>Actinomycetota</taxon>
        <taxon>Actinomycetes</taxon>
        <taxon>Streptosporangiales</taxon>
        <taxon>Nocardiopsidaceae</taxon>
        <taxon>Thermobifida</taxon>
    </lineage>
</organism>
<feature type="chain" id="PRO_0000331920" description="Methionine--tRNA ligase">
    <location>
        <begin position="1"/>
        <end position="606"/>
    </location>
</feature>
<feature type="short sequence motif" description="'HIGH' region">
    <location>
        <begin position="14"/>
        <end position="24"/>
    </location>
</feature>
<feature type="short sequence motif" description="'KMSKS' region">
    <location>
        <begin position="351"/>
        <end position="355"/>
    </location>
</feature>
<feature type="binding site" evidence="1">
    <location>
        <position position="146"/>
    </location>
    <ligand>
        <name>Zn(2+)</name>
        <dbReference type="ChEBI" id="CHEBI:29105"/>
    </ligand>
</feature>
<feature type="binding site" evidence="1">
    <location>
        <position position="149"/>
    </location>
    <ligand>
        <name>Zn(2+)</name>
        <dbReference type="ChEBI" id="CHEBI:29105"/>
    </ligand>
</feature>
<feature type="binding site" evidence="1">
    <location>
        <position position="159"/>
    </location>
    <ligand>
        <name>Zn(2+)</name>
        <dbReference type="ChEBI" id="CHEBI:29105"/>
    </ligand>
</feature>
<feature type="binding site" evidence="1">
    <location>
        <position position="162"/>
    </location>
    <ligand>
        <name>Zn(2+)</name>
        <dbReference type="ChEBI" id="CHEBI:29105"/>
    </ligand>
</feature>
<feature type="binding site" evidence="1">
    <location>
        <position position="354"/>
    </location>
    <ligand>
        <name>ATP</name>
        <dbReference type="ChEBI" id="CHEBI:30616"/>
    </ligand>
</feature>
<name>SYM_THEFY</name>